<organism>
    <name type="scientific">Paenarthrobacter aurescens (strain TC1)</name>
    <dbReference type="NCBI Taxonomy" id="290340"/>
    <lineage>
        <taxon>Bacteria</taxon>
        <taxon>Bacillati</taxon>
        <taxon>Actinomycetota</taxon>
        <taxon>Actinomycetes</taxon>
        <taxon>Micrococcales</taxon>
        <taxon>Micrococcaceae</taxon>
        <taxon>Paenarthrobacter</taxon>
    </lineage>
</organism>
<feature type="chain" id="PRO_1000072620" description="Phosphoenolpyruvate carboxylase">
    <location>
        <begin position="1"/>
        <end position="932"/>
    </location>
</feature>
<feature type="active site" evidence="1">
    <location>
        <position position="155"/>
    </location>
</feature>
<feature type="active site" evidence="1">
    <location>
        <position position="590"/>
    </location>
</feature>
<reference key="1">
    <citation type="journal article" date="2006" name="PLoS Genet.">
        <title>Secrets of soil survival revealed by the genome sequence of Arthrobacter aurescens TC1.</title>
        <authorList>
            <person name="Mongodin E.F."/>
            <person name="Shapir N."/>
            <person name="Daugherty S.C."/>
            <person name="DeBoy R.T."/>
            <person name="Emerson J.B."/>
            <person name="Shvartzbeyn A."/>
            <person name="Radune D."/>
            <person name="Vamathevan J."/>
            <person name="Riggs F."/>
            <person name="Grinberg V."/>
            <person name="Khouri H.M."/>
            <person name="Wackett L.P."/>
            <person name="Nelson K.E."/>
            <person name="Sadowsky M.J."/>
        </authorList>
    </citation>
    <scope>NUCLEOTIDE SEQUENCE [LARGE SCALE GENOMIC DNA]</scope>
    <source>
        <strain>TC1</strain>
    </source>
</reference>
<sequence>MVHTAHQDTDLAAELRADVRRVSTLLGESLVRQHGPELLQLVEQVRLLTKESKEAARGGADATGPWSAHDVVAQVRELLASLPLDQATDLVRAFAFYFHLSNAAEQVHRVRGLRTRQEKDGWLAKAVSEIAGQAGPQVLQDVINGLDVRPIFTAHPTEASRRSVLDKVRKLSDVLAEPTAEGTSARRRQDQQLAEIIDQMWQTDELRQVRPTPVDEARNAIYYLNSILTDAMPEMLTDLSELLAEHGVTLPAAAAPLKFGSWIGGDRDGNPNVTAAVTKEILQLQNQNAVRISIALIDELISVLSNSTALFGADQELLDSITADLKNLPGLDKRILELNAQEPYRLKLTCIKAKLINTGRRISASTYHEPGRDYATTPELLAEFGLLEASLRNHSAGLVADGALARVRRAIAAFGLHLATLDIREHADYHHDAVGQLVDRLGTEKAYGELTREERFTFLGAELASRRPLSGHPIKLEGTADGTYDVFRSIRQALHTYGPDVVETYIISMTRGADDVLAAAVLAREAGLIDLFSGKPHAKIGFAPLLETVEELRASAEIVDQLLSDPSYRELVRLRGDIQEVMLGYSDSNKESGVMTSQWEIHKTQRKLRDVAAKHGVRVRLFHGRGGSVGRGGGPTYDAIMAQPNGVLEGEIKFTEQGEVISDKYSLPELARENLELSLAAVMQGSALHRTPRTSDDERERYANVMETISDAAFARYRTLIDDPQLPAYFLASTPVEQLGSLNIGSRPSKRPDSGAGLGGLRAIPWVFGWTQSRQIVPGWFGVGSGLKAAREAGDTDQLLEMMDRWHFFRSVISNVEMTLAKTDMEIAGHYVSSLVPEELHRLFHMIRDEYELTVAEIERLTGEMELLDAQPTLKRSLEIRDQYLDPISYLQVELLRRVREEQLSGGEIDERLQRAMLITVNGVAAGLRNTG</sequence>
<accession>A1R2V3</accession>
<keyword id="KW-0120">Carbon dioxide fixation</keyword>
<keyword id="KW-0456">Lyase</keyword>
<keyword id="KW-0460">Magnesium</keyword>
<gene>
    <name evidence="1" type="primary">ppc</name>
    <name type="ordered locus">AAur_0764</name>
</gene>
<proteinExistence type="inferred from homology"/>
<comment type="function">
    <text evidence="1">Forms oxaloacetate, a four-carbon dicarboxylic acid source for the tricarboxylic acid cycle.</text>
</comment>
<comment type="catalytic activity">
    <reaction evidence="1">
        <text>oxaloacetate + phosphate = phosphoenolpyruvate + hydrogencarbonate</text>
        <dbReference type="Rhea" id="RHEA:28370"/>
        <dbReference type="ChEBI" id="CHEBI:16452"/>
        <dbReference type="ChEBI" id="CHEBI:17544"/>
        <dbReference type="ChEBI" id="CHEBI:43474"/>
        <dbReference type="ChEBI" id="CHEBI:58702"/>
        <dbReference type="EC" id="4.1.1.31"/>
    </reaction>
</comment>
<comment type="cofactor">
    <cofactor evidence="1">
        <name>Mg(2+)</name>
        <dbReference type="ChEBI" id="CHEBI:18420"/>
    </cofactor>
</comment>
<comment type="similarity">
    <text evidence="1">Belongs to the PEPCase type 1 family.</text>
</comment>
<name>CAPP_PAEAT</name>
<evidence type="ECO:0000255" key="1">
    <source>
        <dbReference type="HAMAP-Rule" id="MF_00595"/>
    </source>
</evidence>
<protein>
    <recommendedName>
        <fullName evidence="1">Phosphoenolpyruvate carboxylase</fullName>
        <shortName evidence="1">PEPC</shortName>
        <shortName evidence="1">PEPCase</shortName>
        <ecNumber evidence="1">4.1.1.31</ecNumber>
    </recommendedName>
</protein>
<dbReference type="EC" id="4.1.1.31" evidence="1"/>
<dbReference type="EMBL" id="CP000474">
    <property type="protein sequence ID" value="ABM08058.1"/>
    <property type="molecule type" value="Genomic_DNA"/>
</dbReference>
<dbReference type="RefSeq" id="WP_011773513.1">
    <property type="nucleotide sequence ID" value="NC_008711.1"/>
</dbReference>
<dbReference type="SMR" id="A1R2V3"/>
<dbReference type="STRING" id="290340.AAur_0764"/>
<dbReference type="KEGG" id="aau:AAur_0764"/>
<dbReference type="eggNOG" id="COG2352">
    <property type="taxonomic scope" value="Bacteria"/>
</dbReference>
<dbReference type="HOGENOM" id="CLU_006557_2_0_11"/>
<dbReference type="OrthoDB" id="9768133at2"/>
<dbReference type="Proteomes" id="UP000000637">
    <property type="component" value="Chromosome"/>
</dbReference>
<dbReference type="GO" id="GO:0005829">
    <property type="term" value="C:cytosol"/>
    <property type="evidence" value="ECO:0007669"/>
    <property type="project" value="TreeGrafter"/>
</dbReference>
<dbReference type="GO" id="GO:0000287">
    <property type="term" value="F:magnesium ion binding"/>
    <property type="evidence" value="ECO:0007669"/>
    <property type="project" value="UniProtKB-UniRule"/>
</dbReference>
<dbReference type="GO" id="GO:0008964">
    <property type="term" value="F:phosphoenolpyruvate carboxylase activity"/>
    <property type="evidence" value="ECO:0007669"/>
    <property type="project" value="UniProtKB-UniRule"/>
</dbReference>
<dbReference type="GO" id="GO:0015977">
    <property type="term" value="P:carbon fixation"/>
    <property type="evidence" value="ECO:0007669"/>
    <property type="project" value="UniProtKB-UniRule"/>
</dbReference>
<dbReference type="GO" id="GO:0006107">
    <property type="term" value="P:oxaloacetate metabolic process"/>
    <property type="evidence" value="ECO:0007669"/>
    <property type="project" value="UniProtKB-UniRule"/>
</dbReference>
<dbReference type="GO" id="GO:0006099">
    <property type="term" value="P:tricarboxylic acid cycle"/>
    <property type="evidence" value="ECO:0007669"/>
    <property type="project" value="InterPro"/>
</dbReference>
<dbReference type="Gene3D" id="1.20.1440.90">
    <property type="entry name" value="Phosphoenolpyruvate/pyruvate domain"/>
    <property type="match status" value="1"/>
</dbReference>
<dbReference type="HAMAP" id="MF_00595">
    <property type="entry name" value="PEPcase_type1"/>
    <property type="match status" value="1"/>
</dbReference>
<dbReference type="InterPro" id="IPR021135">
    <property type="entry name" value="PEP_COase"/>
</dbReference>
<dbReference type="InterPro" id="IPR022805">
    <property type="entry name" value="PEP_COase_bac/pln-type"/>
</dbReference>
<dbReference type="InterPro" id="IPR018129">
    <property type="entry name" value="PEP_COase_Lys_AS"/>
</dbReference>
<dbReference type="InterPro" id="IPR015813">
    <property type="entry name" value="Pyrv/PenolPyrv_kinase-like_dom"/>
</dbReference>
<dbReference type="NCBIfam" id="NF000584">
    <property type="entry name" value="PRK00009.1"/>
    <property type="match status" value="1"/>
</dbReference>
<dbReference type="PANTHER" id="PTHR30523">
    <property type="entry name" value="PHOSPHOENOLPYRUVATE CARBOXYLASE"/>
    <property type="match status" value="1"/>
</dbReference>
<dbReference type="PANTHER" id="PTHR30523:SF6">
    <property type="entry name" value="PHOSPHOENOLPYRUVATE CARBOXYLASE"/>
    <property type="match status" value="1"/>
</dbReference>
<dbReference type="Pfam" id="PF00311">
    <property type="entry name" value="PEPcase"/>
    <property type="match status" value="1"/>
</dbReference>
<dbReference type="PRINTS" id="PR00150">
    <property type="entry name" value="PEPCARBXLASE"/>
</dbReference>
<dbReference type="SUPFAM" id="SSF51621">
    <property type="entry name" value="Phosphoenolpyruvate/pyruvate domain"/>
    <property type="match status" value="1"/>
</dbReference>
<dbReference type="PROSITE" id="PS00781">
    <property type="entry name" value="PEPCASE_1"/>
    <property type="match status" value="1"/>
</dbReference>